<gene>
    <name type="primary">coq4</name>
    <name type="ORF">TSTA_101390</name>
</gene>
<name>COQ4_TALSN</name>
<sequence length="287" mass="32872">MPPTPRTALLTVSNRCLQCHEIGLKYSFRSFSALNRPPPSYPGHVPLTRIERGVLAIGSAFGSLLNPRRHDLIAALGEATATPYFIYRLRDAMLSSPTGRRILRDRPRLTSETLKLPYLRSLPENSVGRTYAKWLDREGVSPDTRDSVQYIDDEECAYVMQRYRECHDFYHAVTGLPTMVEGELALKAFEFLNTVIPMTGLSLAAAIRLKPAERERFFKLHLPWAVRSGLSSEELINVYWEEQLERNVDELRAELGIEAPPDLREIRRMMRQQEKRAKEQQMKASGL</sequence>
<evidence type="ECO:0000255" key="1">
    <source>
        <dbReference type="HAMAP-Rule" id="MF_03111"/>
    </source>
</evidence>
<accession>B8MLN6</accession>
<organism>
    <name type="scientific">Talaromyces stipitatus (strain ATCC 10500 / CBS 375.48 / QM 6759 / NRRL 1006)</name>
    <name type="common">Penicillium stipitatum</name>
    <dbReference type="NCBI Taxonomy" id="441959"/>
    <lineage>
        <taxon>Eukaryota</taxon>
        <taxon>Fungi</taxon>
        <taxon>Dikarya</taxon>
        <taxon>Ascomycota</taxon>
        <taxon>Pezizomycotina</taxon>
        <taxon>Eurotiomycetes</taxon>
        <taxon>Eurotiomycetidae</taxon>
        <taxon>Eurotiales</taxon>
        <taxon>Trichocomaceae</taxon>
        <taxon>Talaromyces</taxon>
        <taxon>Talaromyces sect. Talaromyces</taxon>
    </lineage>
</organism>
<feature type="chain" id="PRO_0000388139" description="Ubiquinone biosynthesis protein coq4, mitochondrial">
    <location>
        <begin position="1"/>
        <end position="287"/>
    </location>
</feature>
<feature type="binding site" evidence="1">
    <location>
        <position position="167"/>
    </location>
    <ligand>
        <name>Zn(2+)</name>
        <dbReference type="ChEBI" id="CHEBI:29105"/>
    </ligand>
</feature>
<feature type="binding site" evidence="1">
    <location>
        <position position="168"/>
    </location>
    <ligand>
        <name>Zn(2+)</name>
        <dbReference type="ChEBI" id="CHEBI:29105"/>
    </ligand>
</feature>
<feature type="binding site" evidence="1">
    <location>
        <position position="171"/>
    </location>
    <ligand>
        <name>Zn(2+)</name>
        <dbReference type="ChEBI" id="CHEBI:29105"/>
    </ligand>
</feature>
<feature type="binding site" evidence="1">
    <location>
        <position position="183"/>
    </location>
    <ligand>
        <name>Zn(2+)</name>
        <dbReference type="ChEBI" id="CHEBI:29105"/>
    </ligand>
</feature>
<protein>
    <recommendedName>
        <fullName evidence="1">Ubiquinone biosynthesis protein coq4, mitochondrial</fullName>
    </recommendedName>
    <alternativeName>
        <fullName>4-hydroxy-3-methoxy-5-polyprenylbenzoate decarboxylase</fullName>
        <ecNumber evidence="1">4.1.1.130</ecNumber>
    </alternativeName>
    <alternativeName>
        <fullName evidence="1">Coenzyme Q biosynthesis protein 4</fullName>
    </alternativeName>
</protein>
<comment type="function">
    <text evidence="1">Lyase that catalyzes the C1-decarboxylation of 4-hydroxy-3-methoxy-5-(all-trans-polyprenyl)benzoic acid into 2-methoxy-6-(all-trans-polyprenyl)phenol during ubiquinone biosynthesis.</text>
</comment>
<comment type="catalytic activity">
    <reaction evidence="1">
        <text>a 4-hydroxy-3-methoxy-5-(all-trans-polyprenyl)benzoate + H(+) = a 2-methoxy-6-(all-trans-polyprenyl)phenol + CO2</text>
        <dbReference type="Rhea" id="RHEA:81179"/>
        <dbReference type="Rhea" id="RHEA-COMP:9551"/>
        <dbReference type="Rhea" id="RHEA-COMP:10931"/>
        <dbReference type="ChEBI" id="CHEBI:15378"/>
        <dbReference type="ChEBI" id="CHEBI:16526"/>
        <dbReference type="ChEBI" id="CHEBI:62731"/>
        <dbReference type="ChEBI" id="CHEBI:84443"/>
        <dbReference type="EC" id="4.1.1.130"/>
    </reaction>
</comment>
<comment type="cofactor">
    <cofactor evidence="1">
        <name>Zn(2+)</name>
        <dbReference type="ChEBI" id="CHEBI:29105"/>
    </cofactor>
</comment>
<comment type="pathway">
    <text evidence="1">Cofactor biosynthesis; ubiquinone biosynthesis.</text>
</comment>
<comment type="subunit">
    <text evidence="1">Component of a multi-subunit COQ enzyme complex, composed of at least coq3, coq4, coq5, coq6, coq7 and coq9.</text>
</comment>
<comment type="subcellular location">
    <subcellularLocation>
        <location evidence="1">Mitochondrion inner membrane</location>
        <topology evidence="1">Peripheral membrane protein</topology>
        <orientation evidence="1">Matrix side</orientation>
    </subcellularLocation>
</comment>
<comment type="miscellaneous">
    <text evidence="1">This protein may be expected to contain an N-terminal transit peptide but none has been predicted.</text>
</comment>
<comment type="similarity">
    <text evidence="1">Belongs to the COQ4 family.</text>
</comment>
<proteinExistence type="inferred from homology"/>
<reference key="1">
    <citation type="journal article" date="2015" name="Genome Announc.">
        <title>Genome sequence of the AIDS-associated pathogen Penicillium marneffei (ATCC18224) and its near taxonomic relative Talaromyces stipitatus (ATCC10500).</title>
        <authorList>
            <person name="Nierman W.C."/>
            <person name="Fedorova-Abrams N.D."/>
            <person name="Andrianopoulos A."/>
        </authorList>
    </citation>
    <scope>NUCLEOTIDE SEQUENCE [LARGE SCALE GENOMIC DNA]</scope>
    <source>
        <strain>ATCC 10500 / CBS 375.48 / QM 6759 / NRRL 1006</strain>
    </source>
</reference>
<keyword id="KW-0456">Lyase</keyword>
<keyword id="KW-0472">Membrane</keyword>
<keyword id="KW-0479">Metal-binding</keyword>
<keyword id="KW-0496">Mitochondrion</keyword>
<keyword id="KW-0999">Mitochondrion inner membrane</keyword>
<keyword id="KW-1185">Reference proteome</keyword>
<keyword id="KW-0831">Ubiquinone biosynthesis</keyword>
<keyword id="KW-0862">Zinc</keyword>
<dbReference type="EC" id="4.1.1.130" evidence="1"/>
<dbReference type="EMBL" id="EQ962658">
    <property type="protein sequence ID" value="EED13899.1"/>
    <property type="molecule type" value="Genomic_DNA"/>
</dbReference>
<dbReference type="RefSeq" id="XP_002486137.1">
    <property type="nucleotide sequence ID" value="XM_002486092.1"/>
</dbReference>
<dbReference type="SMR" id="B8MLN6"/>
<dbReference type="FunCoup" id="B8MLN6">
    <property type="interactions" value="513"/>
</dbReference>
<dbReference type="STRING" id="441959.B8MLN6"/>
<dbReference type="GeneID" id="8101827"/>
<dbReference type="VEuPathDB" id="FungiDB:TSTA_101390"/>
<dbReference type="eggNOG" id="KOG3244">
    <property type="taxonomic scope" value="Eukaryota"/>
</dbReference>
<dbReference type="HOGENOM" id="CLU_061241_0_0_1"/>
<dbReference type="InParanoid" id="B8MLN6"/>
<dbReference type="OMA" id="YYERHFH"/>
<dbReference type="OrthoDB" id="4249at2759"/>
<dbReference type="PhylomeDB" id="B8MLN6"/>
<dbReference type="UniPathway" id="UPA00232"/>
<dbReference type="Proteomes" id="UP000001745">
    <property type="component" value="Unassembled WGS sequence"/>
</dbReference>
<dbReference type="GO" id="GO:0031314">
    <property type="term" value="C:extrinsic component of mitochondrial inner membrane"/>
    <property type="evidence" value="ECO:0007669"/>
    <property type="project" value="UniProtKB-UniRule"/>
</dbReference>
<dbReference type="GO" id="GO:0006744">
    <property type="term" value="P:ubiquinone biosynthetic process"/>
    <property type="evidence" value="ECO:0007669"/>
    <property type="project" value="UniProtKB-UniRule"/>
</dbReference>
<dbReference type="HAMAP" id="MF_03111">
    <property type="entry name" value="Coq4"/>
    <property type="match status" value="1"/>
</dbReference>
<dbReference type="InterPro" id="IPR007715">
    <property type="entry name" value="Coq4"/>
</dbReference>
<dbReference type="InterPro" id="IPR027540">
    <property type="entry name" value="Coq4_euk"/>
</dbReference>
<dbReference type="PANTHER" id="PTHR12922">
    <property type="entry name" value="UBIQUINONE BIOSYNTHESIS PROTEIN"/>
    <property type="match status" value="1"/>
</dbReference>
<dbReference type="PANTHER" id="PTHR12922:SF7">
    <property type="entry name" value="UBIQUINONE BIOSYNTHESIS PROTEIN COQ4 HOMOLOG, MITOCHONDRIAL"/>
    <property type="match status" value="1"/>
</dbReference>
<dbReference type="Pfam" id="PF05019">
    <property type="entry name" value="Coq4"/>
    <property type="match status" value="1"/>
</dbReference>